<name>PSBK_NOSP7</name>
<gene>
    <name evidence="1" type="primary">psbK</name>
    <name type="ordered locus">Npun_F0276</name>
</gene>
<evidence type="ECO:0000255" key="1">
    <source>
        <dbReference type="HAMAP-Rule" id="MF_00441"/>
    </source>
</evidence>
<dbReference type="EMBL" id="CP001037">
    <property type="protein sequence ID" value="ACC79061.1"/>
    <property type="molecule type" value="Genomic_DNA"/>
</dbReference>
<dbReference type="RefSeq" id="WP_006195022.1">
    <property type="nucleotide sequence ID" value="NC_010628.1"/>
</dbReference>
<dbReference type="SMR" id="B2J4T9"/>
<dbReference type="STRING" id="63737.Npun_F0276"/>
<dbReference type="EnsemblBacteria" id="ACC79061">
    <property type="protein sequence ID" value="ACC79061"/>
    <property type="gene ID" value="Npun_F0276"/>
</dbReference>
<dbReference type="KEGG" id="npu:Npun_F0276"/>
<dbReference type="eggNOG" id="ENOG5032YQR">
    <property type="taxonomic scope" value="Bacteria"/>
</dbReference>
<dbReference type="HOGENOM" id="CLU_174355_0_0_3"/>
<dbReference type="Proteomes" id="UP000001191">
    <property type="component" value="Chromosome"/>
</dbReference>
<dbReference type="GO" id="GO:0009539">
    <property type="term" value="C:photosystem II reaction center"/>
    <property type="evidence" value="ECO:0007669"/>
    <property type="project" value="InterPro"/>
</dbReference>
<dbReference type="GO" id="GO:0031676">
    <property type="term" value="C:plasma membrane-derived thylakoid membrane"/>
    <property type="evidence" value="ECO:0007669"/>
    <property type="project" value="UniProtKB-SubCell"/>
</dbReference>
<dbReference type="GO" id="GO:0015979">
    <property type="term" value="P:photosynthesis"/>
    <property type="evidence" value="ECO:0007669"/>
    <property type="project" value="UniProtKB-UniRule"/>
</dbReference>
<dbReference type="HAMAP" id="MF_00441">
    <property type="entry name" value="PSII_PsbK"/>
    <property type="match status" value="1"/>
</dbReference>
<dbReference type="InterPro" id="IPR003687">
    <property type="entry name" value="PSII_PsbK"/>
</dbReference>
<dbReference type="InterPro" id="IPR037270">
    <property type="entry name" value="PSII_PsbK_sf"/>
</dbReference>
<dbReference type="NCBIfam" id="NF002715">
    <property type="entry name" value="PRK02553.1"/>
    <property type="match status" value="1"/>
</dbReference>
<dbReference type="PANTHER" id="PTHR35325">
    <property type="match status" value="1"/>
</dbReference>
<dbReference type="PANTHER" id="PTHR35325:SF1">
    <property type="entry name" value="PHOTOSYSTEM II REACTION CENTER PROTEIN K"/>
    <property type="match status" value="1"/>
</dbReference>
<dbReference type="Pfam" id="PF02533">
    <property type="entry name" value="PsbK"/>
    <property type="match status" value="1"/>
</dbReference>
<dbReference type="SUPFAM" id="SSF161037">
    <property type="entry name" value="Photosystem II reaction center protein K, PsbK"/>
    <property type="match status" value="1"/>
</dbReference>
<organism>
    <name type="scientific">Nostoc punctiforme (strain ATCC 29133 / PCC 73102)</name>
    <dbReference type="NCBI Taxonomy" id="63737"/>
    <lineage>
        <taxon>Bacteria</taxon>
        <taxon>Bacillati</taxon>
        <taxon>Cyanobacteriota</taxon>
        <taxon>Cyanophyceae</taxon>
        <taxon>Nostocales</taxon>
        <taxon>Nostocaceae</taxon>
        <taxon>Nostoc</taxon>
    </lineage>
</organism>
<keyword id="KW-0472">Membrane</keyword>
<keyword id="KW-0602">Photosynthesis</keyword>
<keyword id="KW-0604">Photosystem II</keyword>
<keyword id="KW-0674">Reaction center</keyword>
<keyword id="KW-1185">Reference proteome</keyword>
<keyword id="KW-0793">Thylakoid</keyword>
<keyword id="KW-0812">Transmembrane</keyword>
<keyword id="KW-1133">Transmembrane helix</keyword>
<comment type="function">
    <text evidence="1">One of the components of the core complex of photosystem II (PSII). PSII is a light-driven water:plastoquinone oxidoreductase that uses light energy to abstract electrons from H(2)O, generating O(2) and a proton gradient subsequently used for ATP formation. It consists of a core antenna complex that captures photons, and an electron transfer chain that converts photonic excitation into a charge separation.</text>
</comment>
<comment type="subunit">
    <text evidence="1">PSII is composed of 1 copy each of membrane proteins PsbA, PsbB, PsbC, PsbD, PsbE, PsbF, PsbH, PsbI, PsbJ, PsbK, PsbL, PsbM, PsbT, PsbX, PsbY, PsbZ, Psb30/Ycf12, peripheral proteins PsbO, CyanoQ (PsbQ), PsbU, PsbV and a large number of cofactors. It forms dimeric complexes.</text>
</comment>
<comment type="subcellular location">
    <subcellularLocation>
        <location evidence="1">Cellular thylakoid membrane</location>
        <topology evidence="1">Single-pass membrane protein</topology>
    </subcellularLocation>
</comment>
<comment type="similarity">
    <text evidence="1">Belongs to the PsbK family.</text>
</comment>
<sequence length="45" mass="5046">MEAALLLAKLPEAYQIFDPLVDVLPVIPVFFLLLAFVWQAAVGFR</sequence>
<accession>B2J4T9</accession>
<protein>
    <recommendedName>
        <fullName evidence="1">Photosystem II reaction center protein K</fullName>
        <shortName evidence="1">PSII-K</shortName>
    </recommendedName>
</protein>
<proteinExistence type="inferred from homology"/>
<reference key="1">
    <citation type="journal article" date="2013" name="Plant Physiol.">
        <title>A Nostoc punctiforme Sugar Transporter Necessary to Establish a Cyanobacterium-Plant Symbiosis.</title>
        <authorList>
            <person name="Ekman M."/>
            <person name="Picossi S."/>
            <person name="Campbell E.L."/>
            <person name="Meeks J.C."/>
            <person name="Flores E."/>
        </authorList>
    </citation>
    <scope>NUCLEOTIDE SEQUENCE [LARGE SCALE GENOMIC DNA]</scope>
    <source>
        <strain>ATCC 29133 / PCC 73102</strain>
    </source>
</reference>
<feature type="propeptide" id="PRO_1000124575" evidence="1">
    <location>
        <begin position="1"/>
        <end position="8"/>
    </location>
</feature>
<feature type="chain" id="PRO_1000124576" description="Photosystem II reaction center protein K" evidence="1">
    <location>
        <begin position="9"/>
        <end position="45"/>
    </location>
</feature>
<feature type="transmembrane region" description="Helical" evidence="1">
    <location>
        <begin position="24"/>
        <end position="44"/>
    </location>
</feature>